<evidence type="ECO:0000255" key="1">
    <source>
        <dbReference type="HAMAP-Rule" id="MF_00173"/>
    </source>
</evidence>
<organism>
    <name type="scientific">Escherichia coli (strain ATCC 8739 / DSM 1576 / NBRC 3972 / NCIMB 8545 / WDCM 00012 / Crooks)</name>
    <dbReference type="NCBI Taxonomy" id="481805"/>
    <lineage>
        <taxon>Bacteria</taxon>
        <taxon>Pseudomonadati</taxon>
        <taxon>Pseudomonadota</taxon>
        <taxon>Gammaproteobacteria</taxon>
        <taxon>Enterobacterales</taxon>
        <taxon>Enterobacteriaceae</taxon>
        <taxon>Escherichia</taxon>
    </lineage>
</organism>
<keyword id="KW-0028">Amino-acid biosynthesis</keyword>
<keyword id="KW-0055">Arginine biosynthesis</keyword>
<keyword id="KW-0963">Cytoplasm</keyword>
<keyword id="KW-0238">DNA-binding</keyword>
<keyword id="KW-0678">Repressor</keyword>
<keyword id="KW-0804">Transcription</keyword>
<keyword id="KW-0805">Transcription regulation</keyword>
<sequence length="156" mass="16995">MRSSAKQEELVKAFKALLKEEKFSSQGEIVAALQEQGFDNINQSKVSRMLTKFGAVRTRNAKMEMVYCLPAELGVPTTSSPLKNLVLDIDYNDAVVVIHTSPGAAQLIARLLDSLGKAEGILGTIAGDDTIFTTPANGFTVKDLYEAILELFDQEL</sequence>
<protein>
    <recommendedName>
        <fullName evidence="1">Arginine repressor</fullName>
    </recommendedName>
</protein>
<feature type="chain" id="PRO_1000077126" description="Arginine repressor">
    <location>
        <begin position="1"/>
        <end position="156"/>
    </location>
</feature>
<dbReference type="EMBL" id="CP000946">
    <property type="protein sequence ID" value="ACA76146.1"/>
    <property type="molecule type" value="Genomic_DNA"/>
</dbReference>
<dbReference type="RefSeq" id="WP_001257846.1">
    <property type="nucleotide sequence ID" value="NZ_MTFT01000027.1"/>
</dbReference>
<dbReference type="SMR" id="B1IQP2"/>
<dbReference type="GeneID" id="93778748"/>
<dbReference type="KEGG" id="ecl:EcolC_0469"/>
<dbReference type="HOGENOM" id="CLU_097103_2_0_6"/>
<dbReference type="UniPathway" id="UPA00068"/>
<dbReference type="GO" id="GO:0005737">
    <property type="term" value="C:cytoplasm"/>
    <property type="evidence" value="ECO:0007669"/>
    <property type="project" value="UniProtKB-SubCell"/>
</dbReference>
<dbReference type="GO" id="GO:0034618">
    <property type="term" value="F:arginine binding"/>
    <property type="evidence" value="ECO:0007669"/>
    <property type="project" value="InterPro"/>
</dbReference>
<dbReference type="GO" id="GO:0003677">
    <property type="term" value="F:DNA binding"/>
    <property type="evidence" value="ECO:0007669"/>
    <property type="project" value="UniProtKB-KW"/>
</dbReference>
<dbReference type="GO" id="GO:0003700">
    <property type="term" value="F:DNA-binding transcription factor activity"/>
    <property type="evidence" value="ECO:0007669"/>
    <property type="project" value="UniProtKB-UniRule"/>
</dbReference>
<dbReference type="GO" id="GO:0006526">
    <property type="term" value="P:L-arginine biosynthetic process"/>
    <property type="evidence" value="ECO:0007669"/>
    <property type="project" value="UniProtKB-UniPathway"/>
</dbReference>
<dbReference type="GO" id="GO:0051259">
    <property type="term" value="P:protein complex oligomerization"/>
    <property type="evidence" value="ECO:0007669"/>
    <property type="project" value="InterPro"/>
</dbReference>
<dbReference type="GO" id="GO:1900079">
    <property type="term" value="P:regulation of arginine biosynthetic process"/>
    <property type="evidence" value="ECO:0007669"/>
    <property type="project" value="UniProtKB-UniRule"/>
</dbReference>
<dbReference type="FunFam" id="1.10.10.10:FF:000074">
    <property type="entry name" value="Arginine repressor"/>
    <property type="match status" value="1"/>
</dbReference>
<dbReference type="FunFam" id="3.30.1360.40:FF:000004">
    <property type="entry name" value="Arginine repressor"/>
    <property type="match status" value="1"/>
</dbReference>
<dbReference type="Gene3D" id="3.30.1360.40">
    <property type="match status" value="1"/>
</dbReference>
<dbReference type="Gene3D" id="1.10.10.10">
    <property type="entry name" value="Winged helix-like DNA-binding domain superfamily/Winged helix DNA-binding domain"/>
    <property type="match status" value="1"/>
</dbReference>
<dbReference type="HAMAP" id="MF_00173">
    <property type="entry name" value="Arg_repressor"/>
    <property type="match status" value="1"/>
</dbReference>
<dbReference type="InterPro" id="IPR001669">
    <property type="entry name" value="Arg_repress"/>
</dbReference>
<dbReference type="InterPro" id="IPR020899">
    <property type="entry name" value="Arg_repress_C"/>
</dbReference>
<dbReference type="InterPro" id="IPR036251">
    <property type="entry name" value="Arg_repress_C_sf"/>
</dbReference>
<dbReference type="InterPro" id="IPR020900">
    <property type="entry name" value="Arg_repress_DNA-bd"/>
</dbReference>
<dbReference type="InterPro" id="IPR036388">
    <property type="entry name" value="WH-like_DNA-bd_sf"/>
</dbReference>
<dbReference type="InterPro" id="IPR036390">
    <property type="entry name" value="WH_DNA-bd_sf"/>
</dbReference>
<dbReference type="NCBIfam" id="TIGR01529">
    <property type="entry name" value="argR_whole"/>
    <property type="match status" value="1"/>
</dbReference>
<dbReference type="NCBIfam" id="NF003457">
    <property type="entry name" value="PRK05066.1"/>
    <property type="match status" value="1"/>
</dbReference>
<dbReference type="PANTHER" id="PTHR34471">
    <property type="entry name" value="ARGININE REPRESSOR"/>
    <property type="match status" value="1"/>
</dbReference>
<dbReference type="PANTHER" id="PTHR34471:SF1">
    <property type="entry name" value="ARGININE REPRESSOR"/>
    <property type="match status" value="1"/>
</dbReference>
<dbReference type="Pfam" id="PF01316">
    <property type="entry name" value="Arg_repressor"/>
    <property type="match status" value="1"/>
</dbReference>
<dbReference type="Pfam" id="PF02863">
    <property type="entry name" value="Arg_repressor_C"/>
    <property type="match status" value="1"/>
</dbReference>
<dbReference type="PRINTS" id="PR01467">
    <property type="entry name" value="ARGREPRESSOR"/>
</dbReference>
<dbReference type="SUPFAM" id="SSF55252">
    <property type="entry name" value="C-terminal domain of arginine repressor"/>
    <property type="match status" value="1"/>
</dbReference>
<dbReference type="SUPFAM" id="SSF46785">
    <property type="entry name" value="Winged helix' DNA-binding domain"/>
    <property type="match status" value="1"/>
</dbReference>
<reference key="1">
    <citation type="submission" date="2008-02" db="EMBL/GenBank/DDBJ databases">
        <title>Complete sequence of Escherichia coli C str. ATCC 8739.</title>
        <authorList>
            <person name="Copeland A."/>
            <person name="Lucas S."/>
            <person name="Lapidus A."/>
            <person name="Glavina del Rio T."/>
            <person name="Dalin E."/>
            <person name="Tice H."/>
            <person name="Bruce D."/>
            <person name="Goodwin L."/>
            <person name="Pitluck S."/>
            <person name="Kiss H."/>
            <person name="Brettin T."/>
            <person name="Detter J.C."/>
            <person name="Han C."/>
            <person name="Kuske C.R."/>
            <person name="Schmutz J."/>
            <person name="Larimer F."/>
            <person name="Land M."/>
            <person name="Hauser L."/>
            <person name="Kyrpides N."/>
            <person name="Mikhailova N."/>
            <person name="Ingram L."/>
            <person name="Richardson P."/>
        </authorList>
    </citation>
    <scope>NUCLEOTIDE SEQUENCE [LARGE SCALE GENOMIC DNA]</scope>
    <source>
        <strain>ATCC 8739 / DSM 1576 / NBRC 3972 / NCIMB 8545 / WDCM 00012 / Crooks</strain>
    </source>
</reference>
<accession>B1IQP2</accession>
<name>ARGR_ECOLC</name>
<comment type="function">
    <text evidence="1">Regulates arginine biosynthesis genes.</text>
</comment>
<comment type="pathway">
    <text>Amino-acid biosynthesis; L-arginine biosynthesis [regulation].</text>
</comment>
<comment type="subcellular location">
    <subcellularLocation>
        <location evidence="1">Cytoplasm</location>
    </subcellularLocation>
</comment>
<comment type="similarity">
    <text evidence="1">Belongs to the ArgR family.</text>
</comment>
<proteinExistence type="inferred from homology"/>
<gene>
    <name evidence="1" type="primary">argR</name>
    <name type="ordered locus">EcolC_0469</name>
</gene>